<name>CHEB3_PARM1</name>
<protein>
    <recommendedName>
        <fullName evidence="1">Protein-glutamate methylesterase/protein-glutamine glutaminase 3</fullName>
        <ecNumber evidence="1">3.1.1.61</ecNumber>
        <ecNumber evidence="1">3.5.1.44</ecNumber>
    </recommendedName>
</protein>
<evidence type="ECO:0000255" key="1">
    <source>
        <dbReference type="HAMAP-Rule" id="MF_00099"/>
    </source>
</evidence>
<evidence type="ECO:0000256" key="2">
    <source>
        <dbReference type="SAM" id="MobiDB-lite"/>
    </source>
</evidence>
<feature type="chain" id="PRO_0000264288" description="Protein-glutamate methylesterase/protein-glutamine glutaminase 3">
    <location>
        <begin position="1"/>
        <end position="355"/>
    </location>
</feature>
<feature type="domain" description="Response regulatory" evidence="1">
    <location>
        <begin position="8"/>
        <end position="123"/>
    </location>
</feature>
<feature type="domain" description="CheB-type methylesterase" evidence="1">
    <location>
        <begin position="160"/>
        <end position="350"/>
    </location>
</feature>
<feature type="region of interest" description="Disordered" evidence="2">
    <location>
        <begin position="139"/>
        <end position="161"/>
    </location>
</feature>
<feature type="compositionally biased region" description="Pro residues" evidence="2">
    <location>
        <begin position="145"/>
        <end position="159"/>
    </location>
</feature>
<feature type="active site" evidence="1">
    <location>
        <position position="172"/>
    </location>
</feature>
<feature type="active site" evidence="1">
    <location>
        <position position="199"/>
    </location>
</feature>
<feature type="active site" evidence="1">
    <location>
        <position position="292"/>
    </location>
</feature>
<feature type="modified residue" description="4-aspartylphosphate" evidence="1">
    <location>
        <position position="59"/>
    </location>
</feature>
<organism>
    <name type="scientific">Paramagnetospirillum magneticum (strain ATCC 700264 / AMB-1)</name>
    <name type="common">Magnetospirillum magneticum</name>
    <dbReference type="NCBI Taxonomy" id="342108"/>
    <lineage>
        <taxon>Bacteria</taxon>
        <taxon>Pseudomonadati</taxon>
        <taxon>Pseudomonadota</taxon>
        <taxon>Alphaproteobacteria</taxon>
        <taxon>Rhodospirillales</taxon>
        <taxon>Magnetospirillaceae</taxon>
        <taxon>Paramagnetospirillum</taxon>
    </lineage>
</organism>
<sequence>MPARGKISVLIVDDSGMARAMLRSIFEDEDDFDVVAEAVNGREAIEMVRHLRPGLVTMDLEMPEMGGLEAIEEIMCSKAVPILVVSGVADAQKAFGAMSRGAVDVVAKPNVTSAREVEDFVDKARLVAKIPVITVPRTRSAPAAGPTPVPQAPPPPAAPPAGDGGIIAIAASTGGPQALAALLAAIGRPLSCPMVVAQHISDGFASGMADWLNSISAMPVRLAAEGERLTAGTVYLSPSEWNMSVTESRHIALALRPERQVYRPSCDALLTSVAQVAGRRAVGVILTGMGSDGVAGMEAISKAGGTTLGQDEGSSVIFGMNAIAIERGWVQRVLPLAELAASLLEITGASVGAAP</sequence>
<keyword id="KW-0145">Chemotaxis</keyword>
<keyword id="KW-0963">Cytoplasm</keyword>
<keyword id="KW-0378">Hydrolase</keyword>
<keyword id="KW-0597">Phosphoprotein</keyword>
<proteinExistence type="inferred from homology"/>
<comment type="function">
    <text evidence="1">Involved in chemotaxis. Part of a chemotaxis signal transduction system that modulates chemotaxis in response to various stimuli. Catalyzes the demethylation of specific methylglutamate residues introduced into the chemoreceptors (methyl-accepting chemotaxis proteins or MCP) by CheR. Also mediates the irreversible deamidation of specific glutamine residues to glutamic acid.</text>
</comment>
<comment type="catalytic activity">
    <reaction evidence="1">
        <text>[protein]-L-glutamate 5-O-methyl ester + H2O = L-glutamyl-[protein] + methanol + H(+)</text>
        <dbReference type="Rhea" id="RHEA:23236"/>
        <dbReference type="Rhea" id="RHEA-COMP:10208"/>
        <dbReference type="Rhea" id="RHEA-COMP:10311"/>
        <dbReference type="ChEBI" id="CHEBI:15377"/>
        <dbReference type="ChEBI" id="CHEBI:15378"/>
        <dbReference type="ChEBI" id="CHEBI:17790"/>
        <dbReference type="ChEBI" id="CHEBI:29973"/>
        <dbReference type="ChEBI" id="CHEBI:82795"/>
        <dbReference type="EC" id="3.1.1.61"/>
    </reaction>
</comment>
<comment type="catalytic activity">
    <reaction evidence="1">
        <text>L-glutaminyl-[protein] + H2O = L-glutamyl-[protein] + NH4(+)</text>
        <dbReference type="Rhea" id="RHEA:16441"/>
        <dbReference type="Rhea" id="RHEA-COMP:10207"/>
        <dbReference type="Rhea" id="RHEA-COMP:10208"/>
        <dbReference type="ChEBI" id="CHEBI:15377"/>
        <dbReference type="ChEBI" id="CHEBI:28938"/>
        <dbReference type="ChEBI" id="CHEBI:29973"/>
        <dbReference type="ChEBI" id="CHEBI:30011"/>
        <dbReference type="EC" id="3.5.1.44"/>
    </reaction>
</comment>
<comment type="subcellular location">
    <subcellularLocation>
        <location evidence="1">Cytoplasm</location>
    </subcellularLocation>
</comment>
<comment type="domain">
    <text evidence="1">Contains a C-terminal catalytic domain, and an N-terminal region which modulates catalytic activity.</text>
</comment>
<comment type="PTM">
    <text evidence="1">Phosphorylated by CheA. Phosphorylation of the N-terminal regulatory domain activates the methylesterase activity.</text>
</comment>
<comment type="similarity">
    <text evidence="1">Belongs to the CheB family.</text>
</comment>
<dbReference type="EC" id="3.1.1.61" evidence="1"/>
<dbReference type="EC" id="3.5.1.44" evidence="1"/>
<dbReference type="EMBL" id="AP007255">
    <property type="protein sequence ID" value="BAE51806.1"/>
    <property type="molecule type" value="Genomic_DNA"/>
</dbReference>
<dbReference type="RefSeq" id="WP_011385378.1">
    <property type="nucleotide sequence ID" value="NC_007626.1"/>
</dbReference>
<dbReference type="SMR" id="Q2W2W9"/>
<dbReference type="STRING" id="342108.amb3002"/>
<dbReference type="KEGG" id="mag:amb3002"/>
<dbReference type="HOGENOM" id="CLU_000445_51_0_5"/>
<dbReference type="OrthoDB" id="9793421at2"/>
<dbReference type="Proteomes" id="UP000007058">
    <property type="component" value="Chromosome"/>
</dbReference>
<dbReference type="GO" id="GO:0005737">
    <property type="term" value="C:cytoplasm"/>
    <property type="evidence" value="ECO:0007669"/>
    <property type="project" value="UniProtKB-SubCell"/>
</dbReference>
<dbReference type="GO" id="GO:0000156">
    <property type="term" value="F:phosphorelay response regulator activity"/>
    <property type="evidence" value="ECO:0007669"/>
    <property type="project" value="InterPro"/>
</dbReference>
<dbReference type="GO" id="GO:0008984">
    <property type="term" value="F:protein-glutamate methylesterase activity"/>
    <property type="evidence" value="ECO:0007669"/>
    <property type="project" value="UniProtKB-UniRule"/>
</dbReference>
<dbReference type="GO" id="GO:0050568">
    <property type="term" value="F:protein-glutamine glutaminase activity"/>
    <property type="evidence" value="ECO:0007669"/>
    <property type="project" value="UniProtKB-UniRule"/>
</dbReference>
<dbReference type="GO" id="GO:0006935">
    <property type="term" value="P:chemotaxis"/>
    <property type="evidence" value="ECO:0007669"/>
    <property type="project" value="UniProtKB-UniRule"/>
</dbReference>
<dbReference type="CDD" id="cd16432">
    <property type="entry name" value="CheB_Rec"/>
    <property type="match status" value="1"/>
</dbReference>
<dbReference type="CDD" id="cd17541">
    <property type="entry name" value="REC_CheB-like"/>
    <property type="match status" value="1"/>
</dbReference>
<dbReference type="Gene3D" id="3.40.50.2300">
    <property type="match status" value="1"/>
</dbReference>
<dbReference type="Gene3D" id="3.40.50.180">
    <property type="entry name" value="Methylesterase CheB, C-terminal domain"/>
    <property type="match status" value="1"/>
</dbReference>
<dbReference type="HAMAP" id="MF_00099">
    <property type="entry name" value="CheB_chemtxs"/>
    <property type="match status" value="1"/>
</dbReference>
<dbReference type="InterPro" id="IPR008248">
    <property type="entry name" value="CheB-like"/>
</dbReference>
<dbReference type="InterPro" id="IPR035909">
    <property type="entry name" value="CheB_C"/>
</dbReference>
<dbReference type="InterPro" id="IPR011006">
    <property type="entry name" value="CheY-like_superfamily"/>
</dbReference>
<dbReference type="InterPro" id="IPR000673">
    <property type="entry name" value="Sig_transdc_resp-reg_Me-estase"/>
</dbReference>
<dbReference type="InterPro" id="IPR001789">
    <property type="entry name" value="Sig_transdc_resp-reg_receiver"/>
</dbReference>
<dbReference type="NCBIfam" id="NF001965">
    <property type="entry name" value="PRK00742.1"/>
    <property type="match status" value="1"/>
</dbReference>
<dbReference type="PANTHER" id="PTHR42872">
    <property type="entry name" value="PROTEIN-GLUTAMATE METHYLESTERASE/PROTEIN-GLUTAMINE GLUTAMINASE"/>
    <property type="match status" value="1"/>
</dbReference>
<dbReference type="PANTHER" id="PTHR42872:SF6">
    <property type="entry name" value="PROTEIN-GLUTAMATE METHYLESTERASE_PROTEIN-GLUTAMINE GLUTAMINASE"/>
    <property type="match status" value="1"/>
</dbReference>
<dbReference type="Pfam" id="PF01339">
    <property type="entry name" value="CheB_methylest"/>
    <property type="match status" value="1"/>
</dbReference>
<dbReference type="Pfam" id="PF00072">
    <property type="entry name" value="Response_reg"/>
    <property type="match status" value="1"/>
</dbReference>
<dbReference type="PIRSF" id="PIRSF000876">
    <property type="entry name" value="RR_chemtxs_CheB"/>
    <property type="match status" value="1"/>
</dbReference>
<dbReference type="SMART" id="SM00448">
    <property type="entry name" value="REC"/>
    <property type="match status" value="1"/>
</dbReference>
<dbReference type="SUPFAM" id="SSF52172">
    <property type="entry name" value="CheY-like"/>
    <property type="match status" value="1"/>
</dbReference>
<dbReference type="SUPFAM" id="SSF52738">
    <property type="entry name" value="Methylesterase CheB, C-terminal domain"/>
    <property type="match status" value="1"/>
</dbReference>
<dbReference type="PROSITE" id="PS50122">
    <property type="entry name" value="CHEB"/>
    <property type="match status" value="1"/>
</dbReference>
<dbReference type="PROSITE" id="PS50110">
    <property type="entry name" value="RESPONSE_REGULATORY"/>
    <property type="match status" value="1"/>
</dbReference>
<reference key="1">
    <citation type="journal article" date="2005" name="DNA Res.">
        <title>Complete genome sequence of the facultative anaerobic magnetotactic bacterium Magnetospirillum sp. strain AMB-1.</title>
        <authorList>
            <person name="Matsunaga T."/>
            <person name="Okamura Y."/>
            <person name="Fukuda Y."/>
            <person name="Wahyudi A.T."/>
            <person name="Murase Y."/>
            <person name="Takeyama H."/>
        </authorList>
    </citation>
    <scope>NUCLEOTIDE SEQUENCE [LARGE SCALE GENOMIC DNA]</scope>
    <source>
        <strain>ATCC 700264 / AMB-1</strain>
    </source>
</reference>
<gene>
    <name evidence="1" type="primary">cheB3</name>
    <name type="ordered locus">amb3002</name>
</gene>
<accession>Q2W2W9</accession>